<sequence>MKRIALFLITNLAVMAVLGITASLLGFNRYYAATGLDLGALLGFAMVMGFGGAFISLLMSKPMAKWSTGAVVINDSPEPMHRWLVDTVARFSKRAGIEMPEVALYEGEPNAFATGAFKNSALVAVSTGLLQSMSRDEVEAVIGHEVAHVANGDMVTMTLIQGVMNTFVVFLSRAIGYFIDRVVLKNDREGPGIGYMVTTVVLDLLLGLVAAMIVAWFSRQREFRADAGAAQLMGSRVPMQRALARLGGIDPGELPQSVATMGINGRPSGIMALFSSHPPIEDRIRALQQSA</sequence>
<evidence type="ECO:0000255" key="1">
    <source>
        <dbReference type="HAMAP-Rule" id="MF_00188"/>
    </source>
</evidence>
<feature type="chain" id="PRO_1000098825" description="Protease HtpX homolog">
    <location>
        <begin position="1"/>
        <end position="291"/>
    </location>
</feature>
<feature type="transmembrane region" description="Helical" evidence="1">
    <location>
        <begin position="4"/>
        <end position="24"/>
    </location>
</feature>
<feature type="transmembrane region" description="Helical" evidence="1">
    <location>
        <begin position="38"/>
        <end position="58"/>
    </location>
</feature>
<feature type="transmembrane region" description="Helical" evidence="1">
    <location>
        <begin position="159"/>
        <end position="179"/>
    </location>
</feature>
<feature type="transmembrane region" description="Helical" evidence="1">
    <location>
        <begin position="197"/>
        <end position="217"/>
    </location>
</feature>
<feature type="active site" evidence="1">
    <location>
        <position position="145"/>
    </location>
</feature>
<feature type="binding site" evidence="1">
    <location>
        <position position="144"/>
    </location>
    <ligand>
        <name>Zn(2+)</name>
        <dbReference type="ChEBI" id="CHEBI:29105"/>
        <note>catalytic</note>
    </ligand>
</feature>
<feature type="binding site" evidence="1">
    <location>
        <position position="148"/>
    </location>
    <ligand>
        <name>Zn(2+)</name>
        <dbReference type="ChEBI" id="CHEBI:29105"/>
        <note>catalytic</note>
    </ligand>
</feature>
<feature type="binding site" evidence="1">
    <location>
        <position position="222"/>
    </location>
    <ligand>
        <name>Zn(2+)</name>
        <dbReference type="ChEBI" id="CHEBI:29105"/>
        <note>catalytic</note>
    </ligand>
</feature>
<protein>
    <recommendedName>
        <fullName evidence="1">Protease HtpX homolog</fullName>
        <ecNumber evidence="1">3.4.24.-</ecNumber>
    </recommendedName>
</protein>
<reference key="1">
    <citation type="submission" date="2008-03" db="EMBL/GenBank/DDBJ databases">
        <title>Complete sequence of Leptothrix cholodnii SP-6.</title>
        <authorList>
            <consortium name="US DOE Joint Genome Institute"/>
            <person name="Copeland A."/>
            <person name="Lucas S."/>
            <person name="Lapidus A."/>
            <person name="Glavina del Rio T."/>
            <person name="Dalin E."/>
            <person name="Tice H."/>
            <person name="Bruce D."/>
            <person name="Goodwin L."/>
            <person name="Pitluck S."/>
            <person name="Chertkov O."/>
            <person name="Brettin T."/>
            <person name="Detter J.C."/>
            <person name="Han C."/>
            <person name="Kuske C.R."/>
            <person name="Schmutz J."/>
            <person name="Larimer F."/>
            <person name="Land M."/>
            <person name="Hauser L."/>
            <person name="Kyrpides N."/>
            <person name="Lykidis A."/>
            <person name="Emerson D."/>
            <person name="Richardson P."/>
        </authorList>
    </citation>
    <scope>NUCLEOTIDE SEQUENCE [LARGE SCALE GENOMIC DNA]</scope>
    <source>
        <strain>ATCC 51168 / LMG 8142 / SP-6</strain>
    </source>
</reference>
<comment type="cofactor">
    <cofactor evidence="1">
        <name>Zn(2+)</name>
        <dbReference type="ChEBI" id="CHEBI:29105"/>
    </cofactor>
    <text evidence="1">Binds 1 zinc ion per subunit.</text>
</comment>
<comment type="subcellular location">
    <subcellularLocation>
        <location evidence="1">Cell inner membrane</location>
        <topology evidence="1">Multi-pass membrane protein</topology>
    </subcellularLocation>
</comment>
<comment type="similarity">
    <text evidence="1">Belongs to the peptidase M48B family.</text>
</comment>
<name>HTPX_LEPCP</name>
<accession>B1XWS3</accession>
<dbReference type="EC" id="3.4.24.-" evidence="1"/>
<dbReference type="EMBL" id="CP001013">
    <property type="protein sequence ID" value="ACB36272.1"/>
    <property type="molecule type" value="Genomic_DNA"/>
</dbReference>
<dbReference type="RefSeq" id="WP_012349017.1">
    <property type="nucleotide sequence ID" value="NC_010524.1"/>
</dbReference>
<dbReference type="SMR" id="B1XWS3"/>
<dbReference type="STRING" id="395495.Lcho_4018"/>
<dbReference type="MEROPS" id="M48.002"/>
<dbReference type="KEGG" id="lch:Lcho_4018"/>
<dbReference type="eggNOG" id="COG0501">
    <property type="taxonomic scope" value="Bacteria"/>
</dbReference>
<dbReference type="HOGENOM" id="CLU_042266_1_0_4"/>
<dbReference type="OrthoDB" id="15218at2"/>
<dbReference type="Proteomes" id="UP000001693">
    <property type="component" value="Chromosome"/>
</dbReference>
<dbReference type="GO" id="GO:0005886">
    <property type="term" value="C:plasma membrane"/>
    <property type="evidence" value="ECO:0007669"/>
    <property type="project" value="UniProtKB-SubCell"/>
</dbReference>
<dbReference type="GO" id="GO:0004222">
    <property type="term" value="F:metalloendopeptidase activity"/>
    <property type="evidence" value="ECO:0007669"/>
    <property type="project" value="UniProtKB-UniRule"/>
</dbReference>
<dbReference type="GO" id="GO:0008270">
    <property type="term" value="F:zinc ion binding"/>
    <property type="evidence" value="ECO:0007669"/>
    <property type="project" value="UniProtKB-UniRule"/>
</dbReference>
<dbReference type="GO" id="GO:0006508">
    <property type="term" value="P:proteolysis"/>
    <property type="evidence" value="ECO:0007669"/>
    <property type="project" value="UniProtKB-KW"/>
</dbReference>
<dbReference type="CDD" id="cd07335">
    <property type="entry name" value="M48B_HtpX_like"/>
    <property type="match status" value="1"/>
</dbReference>
<dbReference type="Gene3D" id="3.30.2010.10">
    <property type="entry name" value="Metalloproteases ('zincins'), catalytic domain"/>
    <property type="match status" value="1"/>
</dbReference>
<dbReference type="HAMAP" id="MF_00188">
    <property type="entry name" value="Pept_M48_protease_HtpX"/>
    <property type="match status" value="1"/>
</dbReference>
<dbReference type="InterPro" id="IPR050083">
    <property type="entry name" value="HtpX_protease"/>
</dbReference>
<dbReference type="InterPro" id="IPR022919">
    <property type="entry name" value="Pept_M48_protease_HtpX"/>
</dbReference>
<dbReference type="InterPro" id="IPR001915">
    <property type="entry name" value="Peptidase_M48"/>
</dbReference>
<dbReference type="NCBIfam" id="NF003965">
    <property type="entry name" value="PRK05457.1"/>
    <property type="match status" value="1"/>
</dbReference>
<dbReference type="PANTHER" id="PTHR43221">
    <property type="entry name" value="PROTEASE HTPX"/>
    <property type="match status" value="1"/>
</dbReference>
<dbReference type="PANTHER" id="PTHR43221:SF1">
    <property type="entry name" value="PROTEASE HTPX"/>
    <property type="match status" value="1"/>
</dbReference>
<dbReference type="Pfam" id="PF01435">
    <property type="entry name" value="Peptidase_M48"/>
    <property type="match status" value="1"/>
</dbReference>
<organism>
    <name type="scientific">Leptothrix cholodnii (strain ATCC 51168 / LMG 8142 / SP-6)</name>
    <name type="common">Leptothrix discophora (strain SP-6)</name>
    <dbReference type="NCBI Taxonomy" id="395495"/>
    <lineage>
        <taxon>Bacteria</taxon>
        <taxon>Pseudomonadati</taxon>
        <taxon>Pseudomonadota</taxon>
        <taxon>Betaproteobacteria</taxon>
        <taxon>Burkholderiales</taxon>
        <taxon>Sphaerotilaceae</taxon>
        <taxon>Leptothrix</taxon>
    </lineage>
</organism>
<gene>
    <name evidence="1" type="primary">htpX</name>
    <name type="ordered locus">Lcho_4018</name>
</gene>
<proteinExistence type="inferred from homology"/>
<keyword id="KW-0997">Cell inner membrane</keyword>
<keyword id="KW-1003">Cell membrane</keyword>
<keyword id="KW-0378">Hydrolase</keyword>
<keyword id="KW-0472">Membrane</keyword>
<keyword id="KW-0479">Metal-binding</keyword>
<keyword id="KW-0482">Metalloprotease</keyword>
<keyword id="KW-0645">Protease</keyword>
<keyword id="KW-1185">Reference proteome</keyword>
<keyword id="KW-0812">Transmembrane</keyword>
<keyword id="KW-1133">Transmembrane helix</keyword>
<keyword id="KW-0862">Zinc</keyword>